<organism>
    <name type="scientific">Escherichia coli (strain K12)</name>
    <dbReference type="NCBI Taxonomy" id="83333"/>
    <lineage>
        <taxon>Bacteria</taxon>
        <taxon>Pseudomonadati</taxon>
        <taxon>Pseudomonadota</taxon>
        <taxon>Gammaproteobacteria</taxon>
        <taxon>Enterobacterales</taxon>
        <taxon>Enterobacteriaceae</taxon>
        <taxon>Escherichia</taxon>
    </lineage>
</organism>
<keyword id="KW-0233">DNA recombination</keyword>
<keyword id="KW-0238">DNA-binding</keyword>
<keyword id="KW-0814">Transposable element</keyword>
<keyword id="KW-0815">Transposition</keyword>
<protein>
    <recommendedName>
        <fullName>Transposase InsC for insertion element IS2-11</fullName>
    </recommendedName>
</protein>
<sequence length="121" mass="13452">MIDVLGPEKRRRRTTQEKIAIVQQSFEPGMTVSLVARQHGVAASQLFLWRKQYQEGSLTAVAAGEQVVPASELAAAMKQIKELQRLLGKKTMENELLKEAVEYGRAKKWIAHAPLLPGDGE</sequence>
<name>INC11_ECOLI</name>
<accession>P0CF50</accession>
<accession>O07989</accession>
<accession>O08018</accession>
<accession>O08019</accession>
<accession>P0C5W2</accession>
<accession>P19776</accession>
<accession>P76357</accession>
<accession>P77346</accession>
<accession>Q2MBI5</accession>
<accession>Q2MC65</accession>
<accession>Q79BJ2</accession>
<accession>Q9JMT0</accession>
<evidence type="ECO:0000305" key="1"/>
<comment type="function">
    <text>Involved in the transposition of the insertion sequence IS2.</text>
</comment>
<comment type="similarity">
    <text evidence="1">Belongs to the transposase 8 family.</text>
</comment>
<comment type="caution">
    <text evidence="1">There is no equivalent of this gene in strain K12 / MG1655.</text>
</comment>
<feature type="chain" id="PRO_0000393458" description="Transposase InsC for insertion element IS2-11">
    <location>
        <begin position="1"/>
        <end position="121"/>
    </location>
</feature>
<reference key="1">
    <citation type="journal article" date="2006" name="Mol. Syst. Biol.">
        <title>Highly accurate genome sequences of Escherichia coli K-12 strains MG1655 and W3110.</title>
        <authorList>
            <person name="Hayashi K."/>
            <person name="Morooka N."/>
            <person name="Yamamoto Y."/>
            <person name="Fujita K."/>
            <person name="Isono K."/>
            <person name="Choi S."/>
            <person name="Ohtsubo E."/>
            <person name="Baba T."/>
            <person name="Wanner B.L."/>
            <person name="Mori H."/>
            <person name="Horiuchi T."/>
        </authorList>
    </citation>
    <scope>NUCLEOTIDE SEQUENCE [LARGE SCALE GENOMIC DNA]</scope>
    <source>
        <strain>K12 / W3110 / ATCC 27325 / DSM 5911</strain>
    </source>
</reference>
<gene>
    <name type="ordered locus">JW5934</name>
</gene>
<dbReference type="EMBL" id="AP009048">
    <property type="protein sequence ID" value="BAE77578.1"/>
    <property type="molecule type" value="Genomic_DNA"/>
</dbReference>
<dbReference type="SMR" id="P0CF50"/>
<dbReference type="KEGG" id="ecj:JW5934"/>
<dbReference type="KEGG" id="ecoc:C3026_00670"/>
<dbReference type="KEGG" id="ecoc:C3026_03840"/>
<dbReference type="KEGG" id="ecoc:C3026_06235"/>
<dbReference type="KEGG" id="ecoc:C3026_08180"/>
<dbReference type="KEGG" id="ecoc:C3026_09100"/>
<dbReference type="KEGG" id="ecoc:C3026_11265"/>
<dbReference type="KEGG" id="ecoc:C3026_15305"/>
<dbReference type="KEGG" id="ecoc:C3026_15700"/>
<dbReference type="KEGG" id="ecoc:C3026_16625"/>
<dbReference type="KEGG" id="ecoc:C3026_20340"/>
<dbReference type="KEGG" id="ecoc:C3026_23040"/>
<dbReference type="KEGG" id="ecoc:C3026_24220"/>
<dbReference type="HOGENOM" id="CLU_027402_25_0_6"/>
<dbReference type="PhylomeDB" id="P0CF50"/>
<dbReference type="GO" id="GO:0003677">
    <property type="term" value="F:DNA binding"/>
    <property type="evidence" value="ECO:0007669"/>
    <property type="project" value="UniProtKB-KW"/>
</dbReference>
<dbReference type="GO" id="GO:0004803">
    <property type="term" value="F:transposase activity"/>
    <property type="evidence" value="ECO:0007669"/>
    <property type="project" value="InterPro"/>
</dbReference>
<dbReference type="GO" id="GO:0006313">
    <property type="term" value="P:DNA transposition"/>
    <property type="evidence" value="ECO:0007669"/>
    <property type="project" value="InterPro"/>
</dbReference>
<dbReference type="Gene3D" id="1.10.10.10">
    <property type="entry name" value="Winged helix-like DNA-binding domain superfamily/Winged helix DNA-binding domain"/>
    <property type="match status" value="1"/>
</dbReference>
<dbReference type="InterPro" id="IPR009057">
    <property type="entry name" value="Homeodomain-like_sf"/>
</dbReference>
<dbReference type="InterPro" id="IPR002514">
    <property type="entry name" value="Transposase_8"/>
</dbReference>
<dbReference type="InterPro" id="IPR036388">
    <property type="entry name" value="WH-like_DNA-bd_sf"/>
</dbReference>
<dbReference type="NCBIfam" id="NF006928">
    <property type="entry name" value="PRK09413.1"/>
    <property type="match status" value="1"/>
</dbReference>
<dbReference type="PANTHER" id="PTHR37936">
    <property type="entry name" value="TRANSPOSASE INSC FOR INSERTION ELEMENT IS2A-RELATED"/>
    <property type="match status" value="1"/>
</dbReference>
<dbReference type="PANTHER" id="PTHR37936:SF3">
    <property type="entry name" value="TRANSPOSASE INSC FOR INSERTION ELEMENT IS2A-RELATED"/>
    <property type="match status" value="1"/>
</dbReference>
<dbReference type="Pfam" id="PF01527">
    <property type="entry name" value="HTH_Tnp_1"/>
    <property type="match status" value="1"/>
</dbReference>
<dbReference type="SUPFAM" id="SSF46689">
    <property type="entry name" value="Homeodomain-like"/>
    <property type="match status" value="1"/>
</dbReference>
<proteinExistence type="inferred from homology"/>